<dbReference type="EC" id="2.4.2.17" evidence="1"/>
<dbReference type="EMBL" id="CP000698">
    <property type="protein sequence ID" value="ABQ27403.1"/>
    <property type="molecule type" value="Genomic_DNA"/>
</dbReference>
<dbReference type="RefSeq" id="WP_011940066.1">
    <property type="nucleotide sequence ID" value="NC_009483.1"/>
</dbReference>
<dbReference type="SMR" id="A5G6I5"/>
<dbReference type="STRING" id="351605.Gura_3242"/>
<dbReference type="KEGG" id="gur:Gura_3242"/>
<dbReference type="HOGENOM" id="CLU_038115_1_1_7"/>
<dbReference type="OrthoDB" id="9801867at2"/>
<dbReference type="UniPathway" id="UPA00031">
    <property type="reaction ID" value="UER00006"/>
</dbReference>
<dbReference type="Proteomes" id="UP000006695">
    <property type="component" value="Chromosome"/>
</dbReference>
<dbReference type="GO" id="GO:0005737">
    <property type="term" value="C:cytoplasm"/>
    <property type="evidence" value="ECO:0007669"/>
    <property type="project" value="UniProtKB-SubCell"/>
</dbReference>
<dbReference type="GO" id="GO:0005524">
    <property type="term" value="F:ATP binding"/>
    <property type="evidence" value="ECO:0007669"/>
    <property type="project" value="UniProtKB-KW"/>
</dbReference>
<dbReference type="GO" id="GO:0003879">
    <property type="term" value="F:ATP phosphoribosyltransferase activity"/>
    <property type="evidence" value="ECO:0007669"/>
    <property type="project" value="UniProtKB-UniRule"/>
</dbReference>
<dbReference type="GO" id="GO:0000287">
    <property type="term" value="F:magnesium ion binding"/>
    <property type="evidence" value="ECO:0007669"/>
    <property type="project" value="UniProtKB-UniRule"/>
</dbReference>
<dbReference type="GO" id="GO:0000105">
    <property type="term" value="P:L-histidine biosynthetic process"/>
    <property type="evidence" value="ECO:0007669"/>
    <property type="project" value="UniProtKB-UniRule"/>
</dbReference>
<dbReference type="CDD" id="cd13593">
    <property type="entry name" value="PBP2_HisGL3"/>
    <property type="match status" value="1"/>
</dbReference>
<dbReference type="FunFam" id="3.30.70.120:FF:000002">
    <property type="entry name" value="ATP phosphoribosyltransferase"/>
    <property type="match status" value="1"/>
</dbReference>
<dbReference type="FunFam" id="3.40.190.10:FF:000258">
    <property type="entry name" value="ATP phosphoribosyltransferase"/>
    <property type="match status" value="1"/>
</dbReference>
<dbReference type="Gene3D" id="3.30.70.120">
    <property type="match status" value="1"/>
</dbReference>
<dbReference type="Gene3D" id="3.40.190.10">
    <property type="entry name" value="Periplasmic binding protein-like II"/>
    <property type="match status" value="2"/>
</dbReference>
<dbReference type="HAMAP" id="MF_00079">
    <property type="entry name" value="HisG_Long"/>
    <property type="match status" value="1"/>
</dbReference>
<dbReference type="InterPro" id="IPR020621">
    <property type="entry name" value="ATP-PRT_HisG_long"/>
</dbReference>
<dbReference type="InterPro" id="IPR013820">
    <property type="entry name" value="ATP_PRibTrfase_cat"/>
</dbReference>
<dbReference type="InterPro" id="IPR001348">
    <property type="entry name" value="ATP_PRibTrfase_HisG"/>
</dbReference>
<dbReference type="InterPro" id="IPR013115">
    <property type="entry name" value="HisG_C"/>
</dbReference>
<dbReference type="InterPro" id="IPR011322">
    <property type="entry name" value="N-reg_PII-like_a/b"/>
</dbReference>
<dbReference type="InterPro" id="IPR015867">
    <property type="entry name" value="N-reg_PII/ATP_PRibTrfase_C"/>
</dbReference>
<dbReference type="NCBIfam" id="TIGR00070">
    <property type="entry name" value="hisG"/>
    <property type="match status" value="1"/>
</dbReference>
<dbReference type="NCBIfam" id="TIGR03455">
    <property type="entry name" value="HisG_C-term"/>
    <property type="match status" value="1"/>
</dbReference>
<dbReference type="PANTHER" id="PTHR21403:SF10">
    <property type="entry name" value="ATP PHOSPHORIBOSYLTRANSFERASE"/>
    <property type="match status" value="1"/>
</dbReference>
<dbReference type="PANTHER" id="PTHR21403">
    <property type="entry name" value="ATP PHOSPHORIBOSYLTRANSFERASE ATP-PRTASE"/>
    <property type="match status" value="1"/>
</dbReference>
<dbReference type="Pfam" id="PF01634">
    <property type="entry name" value="HisG"/>
    <property type="match status" value="1"/>
</dbReference>
<dbReference type="Pfam" id="PF08029">
    <property type="entry name" value="HisG_C"/>
    <property type="match status" value="1"/>
</dbReference>
<dbReference type="SUPFAM" id="SSF54913">
    <property type="entry name" value="GlnB-like"/>
    <property type="match status" value="1"/>
</dbReference>
<dbReference type="SUPFAM" id="SSF53850">
    <property type="entry name" value="Periplasmic binding protein-like II"/>
    <property type="match status" value="1"/>
</dbReference>
<comment type="function">
    <text evidence="1">Catalyzes the condensation of ATP and 5-phosphoribose 1-diphosphate to form N'-(5'-phosphoribosyl)-ATP (PR-ATP). Has a crucial role in the pathway because the rate of histidine biosynthesis seems to be controlled primarily by regulation of HisG enzymatic activity.</text>
</comment>
<comment type="catalytic activity">
    <reaction evidence="1">
        <text>1-(5-phospho-beta-D-ribosyl)-ATP + diphosphate = 5-phospho-alpha-D-ribose 1-diphosphate + ATP</text>
        <dbReference type="Rhea" id="RHEA:18473"/>
        <dbReference type="ChEBI" id="CHEBI:30616"/>
        <dbReference type="ChEBI" id="CHEBI:33019"/>
        <dbReference type="ChEBI" id="CHEBI:58017"/>
        <dbReference type="ChEBI" id="CHEBI:73183"/>
        <dbReference type="EC" id="2.4.2.17"/>
    </reaction>
</comment>
<comment type="cofactor">
    <cofactor evidence="1">
        <name>Mg(2+)</name>
        <dbReference type="ChEBI" id="CHEBI:18420"/>
    </cofactor>
</comment>
<comment type="activity regulation">
    <text evidence="1">Feedback inhibited by histidine.</text>
</comment>
<comment type="pathway">
    <text evidence="1">Amino-acid biosynthesis; L-histidine biosynthesis; L-histidine from 5-phospho-alpha-D-ribose 1-diphosphate: step 1/9.</text>
</comment>
<comment type="subcellular location">
    <subcellularLocation>
        <location evidence="1">Cytoplasm</location>
    </subcellularLocation>
</comment>
<comment type="similarity">
    <text evidence="1">Belongs to the ATP phosphoribosyltransferase family. Long subfamily.</text>
</comment>
<name>HIS1_GEOUR</name>
<gene>
    <name evidence="1" type="primary">hisG</name>
    <name type="ordered locus">Gura_3242</name>
</gene>
<protein>
    <recommendedName>
        <fullName evidence="1">ATP phosphoribosyltransferase</fullName>
        <shortName evidence="1">ATP-PRT</shortName>
        <shortName evidence="1">ATP-PRTase</shortName>
        <ecNumber evidence="1">2.4.2.17</ecNumber>
    </recommendedName>
</protein>
<evidence type="ECO:0000255" key="1">
    <source>
        <dbReference type="HAMAP-Rule" id="MF_00079"/>
    </source>
</evidence>
<reference key="1">
    <citation type="submission" date="2007-05" db="EMBL/GenBank/DDBJ databases">
        <title>Complete sequence of Geobacter uraniireducens Rf4.</title>
        <authorList>
            <consortium name="US DOE Joint Genome Institute"/>
            <person name="Copeland A."/>
            <person name="Lucas S."/>
            <person name="Lapidus A."/>
            <person name="Barry K."/>
            <person name="Detter J.C."/>
            <person name="Glavina del Rio T."/>
            <person name="Hammon N."/>
            <person name="Israni S."/>
            <person name="Dalin E."/>
            <person name="Tice H."/>
            <person name="Pitluck S."/>
            <person name="Chertkov O."/>
            <person name="Brettin T."/>
            <person name="Bruce D."/>
            <person name="Han C."/>
            <person name="Schmutz J."/>
            <person name="Larimer F."/>
            <person name="Land M."/>
            <person name="Hauser L."/>
            <person name="Kyrpides N."/>
            <person name="Mikhailova N."/>
            <person name="Shelobolina E."/>
            <person name="Aklujkar M."/>
            <person name="Lovley D."/>
            <person name="Richardson P."/>
        </authorList>
    </citation>
    <scope>NUCLEOTIDE SEQUENCE [LARGE SCALE GENOMIC DNA]</scope>
    <source>
        <strain>ATCC BAA-1134 / JCM 13001 / Rf4</strain>
    </source>
</reference>
<feature type="chain" id="PRO_1000075261" description="ATP phosphoribosyltransferase">
    <location>
        <begin position="1"/>
        <end position="291"/>
    </location>
</feature>
<accession>A5G6I5</accession>
<organism>
    <name type="scientific">Geotalea uraniireducens (strain Rf4)</name>
    <name type="common">Geobacter uraniireducens</name>
    <dbReference type="NCBI Taxonomy" id="351605"/>
    <lineage>
        <taxon>Bacteria</taxon>
        <taxon>Pseudomonadati</taxon>
        <taxon>Thermodesulfobacteriota</taxon>
        <taxon>Desulfuromonadia</taxon>
        <taxon>Geobacterales</taxon>
        <taxon>Geobacteraceae</taxon>
        <taxon>Geotalea</taxon>
    </lineage>
</organism>
<sequence length="291" mass="32205">MSNILKFGIPKGSLEDATVDLFKQAGWQVGISSRSYFPTIDDEEMNCKLIRPQEMGKYVERGTIDVGIAGRDWVRENDSDVIEVCEMVYSKVSRRPVRWVLVVSQDSPVQKPEDLHGATISTELVGFTKRYFAERNIPVTVEFSWGATEAKVVDGLCDAIVEVTETGSTIRANNLRIVCDLMESVPVLIVNKAAWADPWKQAKIQQIATLLKSALAAEGMVGLKMNAPNSAVDAITEILPSLNNPTVSHLYNSDWVSIESILPEKEVRSIVPKLLKMGAEGIVEYPLNKII</sequence>
<keyword id="KW-0028">Amino-acid biosynthesis</keyword>
<keyword id="KW-0067">ATP-binding</keyword>
<keyword id="KW-0963">Cytoplasm</keyword>
<keyword id="KW-0328">Glycosyltransferase</keyword>
<keyword id="KW-0368">Histidine biosynthesis</keyword>
<keyword id="KW-0460">Magnesium</keyword>
<keyword id="KW-0479">Metal-binding</keyword>
<keyword id="KW-0547">Nucleotide-binding</keyword>
<keyword id="KW-1185">Reference proteome</keyword>
<keyword id="KW-0808">Transferase</keyword>
<proteinExistence type="inferred from homology"/>